<organism>
    <name type="scientific">Streptomyces chartreusis</name>
    <dbReference type="NCBI Taxonomy" id="1969"/>
    <lineage>
        <taxon>Bacteria</taxon>
        <taxon>Bacillati</taxon>
        <taxon>Actinomycetota</taxon>
        <taxon>Actinomycetes</taxon>
        <taxon>Kitasatosporales</taxon>
        <taxon>Streptomycetaceae</taxon>
        <taxon>Streptomyces</taxon>
    </lineage>
</organism>
<proteinExistence type="evidence at protein level"/>
<protein>
    <recommendedName>
        <fullName>Extracellular exo-alpha-L-arabinofuranosidase</fullName>
        <shortName>ABF</shortName>
        <ecNumber>3.2.1.55</ecNumber>
    </recommendedName>
    <alternativeName>
        <fullName>Alpha-L-AFase</fullName>
    </alternativeName>
    <alternativeName>
        <fullName>Extracellular arabinan exo-alpha-L-arabinosidase</fullName>
        <shortName>Arabinosidase</shortName>
    </alternativeName>
</protein>
<feature type="signal peptide" evidence="2">
    <location>
        <begin position="1"/>
        <end position="29"/>
    </location>
</feature>
<feature type="chain" id="PRO_0000012217" description="Extracellular exo-alpha-L-arabinofuranosidase">
    <location>
        <begin position="30"/>
        <end position="825"/>
    </location>
</feature>
<feature type="domain" description="CBM-cenC">
    <location>
        <begin position="70"/>
        <end position="215"/>
    </location>
</feature>
<feature type="active site" description="Proton donor/acceptor" evidence="1">
    <location>
        <position position="380"/>
    </location>
</feature>
<feature type="binding site" evidence="1">
    <location>
        <position position="58"/>
    </location>
    <ligand>
        <name>alpha-L-arabinofuranose</name>
        <dbReference type="ChEBI" id="CHEBI:28772"/>
    </ligand>
</feature>
<feature type="binding site" evidence="1">
    <location>
        <position position="247"/>
    </location>
    <ligand>
        <name>alpha-L-arabinofuranose</name>
        <dbReference type="ChEBI" id="CHEBI:28772"/>
    </ligand>
</feature>
<feature type="binding site" evidence="1">
    <location>
        <begin position="379"/>
        <end position="380"/>
    </location>
    <ligand>
        <name>alpha-L-arabinofuranose</name>
        <dbReference type="ChEBI" id="CHEBI:28772"/>
    </ligand>
</feature>
<feature type="site" description="Important for substrate recognition" evidence="1">
    <location>
        <position position="607"/>
    </location>
</feature>
<name>EABF_STRCX</name>
<sequence length="825" mass="90184">MSRIRWRYGTAATALLVAAGLVPTATAHAEDVTDYSITVDPAAKGAAIDDTMYGVFFEDINRAADGGLYAELVQNRSFEYSTDDNRSYTPLTSWIVDGTGEVVNDAGRLNERNRNYLSLGAGSSVTNAGYNTGIRVEQGKRYDFSVWARAGSASTLTVALKDAAGTLATARQVAVEGGWAKYRATFTATRTSNRGRLAVAANDAAALDMVSLFPRDTYRNQQNGLRKDLAEKIAALHPGFVRFPGGCLVNTGSMEDYSAASGWQRKRSYQWKDTVGPVEERATNANFWGYNQSYGLGYYEYFRFSEDIGAMPLPVVPALVTGCGQNKAVDDEALLKRHIQDTLDLIEFANGPATSKWGKVRAEMGHPRPFRLTHLEVGNEENLPDEFFDRFKQFRAAIEAEYPDITVVSNSGPDDAGTTFDTAWKLNREANVEMVDEHYYNSPNWFLQNNDRYDSYDRGGPKVFLGEYASQGNAWKNGLSEAAFMTGLERNADVVKLASYAPLLANEDYVQWRPDLVWFNNRASWNSANYEVQKLFMNNVGDRVVPSKATTTPDVSGPITGAVGLSTWATGTAYDDVKVTAADGATLLSDDFSGDASKWTHTGAGSWSVQDGQYVQTDAAAENTMVQAGDPSWHDYDLHVKATKKSGKEGFLVAFGVKDTGNYYWWNLGGWNNTQSAVEQAVDGGKGTLLTKAGSIETGRAYDIDVKVRGRQVTLYLDGQEWGGFTDDKPAEPFRQVVTKDARTGDLIVKVVNAQPAEARTAIDLGGARVASTARVTTLAADQDAVNTETDAPVTPATSTFSGVTDRFTYTFPANSVTFLRLKQR</sequence>
<comment type="function">
    <text evidence="2">Involved in the degradation of arabinan and is a key enzyme in the complete degradation of the plant cell wall. Catalyzes the cleavage of terminal alpha-L-arabinofuranosyl residues of arabinan present in the arabinofuranosyl polysaccharides or oligosaccharides. It cannot act on other arabinose-containing polysaccharides and arabinoxylo-oligosaccharides. It leaves most of the polymer intact, including most of the main-chain residues and the arabinose side chains. It acts preferentially on the linear alpha-(1-&gt;2)-linked arabinofuranobiosides and alpha-(1-&gt;3)-linked arabinofuranobiosides, and is much less effective on alpha-(1-&gt;5)-linked arabinofuranobiosides. It also hydrolyzes the terminal alpha-(1-&gt;3)-linked arabinofuranotriosides in preference to the alpha-(1-&gt;5)-linked arabinofuranotriosides.</text>
</comment>
<comment type="catalytic activity">
    <reaction evidence="2">
        <text>Hydrolysis of terminal non-reducing alpha-L-arabinofuranoside residues in alpha-L-arabinosides.</text>
        <dbReference type="EC" id="3.2.1.55"/>
    </reaction>
</comment>
<comment type="biophysicochemical properties">
    <phDependence>
        <text evidence="2">Optimum pH is 5.5. The enzyme is slowly inactivated above pH 8.5 and below pH 5.5.</text>
    </phDependence>
    <temperatureDependence>
        <text evidence="2">Optimum temperature is 55 degrees Celsius. The enzyme is inactivated at temperatures above 45 degrees Celsius.</text>
    </temperatureDependence>
</comment>
<comment type="subcellular location">
    <subcellularLocation>
        <location>Secreted</location>
    </subcellularLocation>
</comment>
<comment type="similarity">
    <text evidence="3">Belongs to the glycosyl hydrolase 51 family.</text>
</comment>
<accession>P82593</accession>
<evidence type="ECO:0000250" key="1"/>
<evidence type="ECO:0000269" key="2">
    <source>
    </source>
</evidence>
<evidence type="ECO:0000305" key="3"/>
<keyword id="KW-0119">Carbohydrate metabolism</keyword>
<keyword id="KW-0903">Direct protein sequencing</keyword>
<keyword id="KW-0326">Glycosidase</keyword>
<keyword id="KW-0378">Hydrolase</keyword>
<keyword id="KW-0964">Secreted</keyword>
<keyword id="KW-0732">Signal</keyword>
<reference key="1">
    <citation type="journal article" date="2000" name="Biochem. J.">
        <title>Purification, characterization and gene cloning of two alpha-L-arabinofuranosidases from Streptomyces chartreusis GS901.</title>
        <authorList>
            <person name="Matsuo N."/>
            <person name="Kaneko S."/>
            <person name="Kuno A."/>
            <person name="Kobayashi H."/>
            <person name="Kusakabe I."/>
        </authorList>
    </citation>
    <scope>NUCLEOTIDE SEQUENCE [GENOMIC DNA]</scope>
    <scope>PROTEIN SEQUENCE OF 30-75</scope>
    <scope>FUNCTION</scope>
    <scope>CATALYTIC ACTIVITY</scope>
    <scope>BIOPHYSICOCHEMICAL PROPERTIES</scope>
    <scope>SUBSTRATE SPECIFICITY</scope>
    <source>
        <strain>GS901</strain>
    </source>
</reference>
<dbReference type="EC" id="3.2.1.55"/>
<dbReference type="EMBL" id="AB023625">
    <property type="protein sequence ID" value="BAA90771.1"/>
    <property type="molecule type" value="Genomic_DNA"/>
</dbReference>
<dbReference type="PIR" id="A59296">
    <property type="entry name" value="A59296"/>
</dbReference>
<dbReference type="SMR" id="P82593"/>
<dbReference type="CAZy" id="GH51">
    <property type="family name" value="Glycoside Hydrolase Family 51"/>
</dbReference>
<dbReference type="BRENDA" id="3.2.1.55">
    <property type="organism ID" value="5991"/>
</dbReference>
<dbReference type="GO" id="GO:0005576">
    <property type="term" value="C:extracellular region"/>
    <property type="evidence" value="ECO:0007669"/>
    <property type="project" value="UniProtKB-SubCell"/>
</dbReference>
<dbReference type="GO" id="GO:0046556">
    <property type="term" value="F:alpha-L-arabinofuranosidase activity"/>
    <property type="evidence" value="ECO:0007669"/>
    <property type="project" value="UniProtKB-EC"/>
</dbReference>
<dbReference type="GO" id="GO:0046373">
    <property type="term" value="P:L-arabinose metabolic process"/>
    <property type="evidence" value="ECO:0007669"/>
    <property type="project" value="InterPro"/>
</dbReference>
<dbReference type="FunFam" id="3.20.20.80:FF:000090">
    <property type="entry name" value="Alpha-L-arabinofuranosidase A"/>
    <property type="match status" value="1"/>
</dbReference>
<dbReference type="FunFam" id="2.60.120.560:FF:000007">
    <property type="entry name" value="Alpha-N-arabinofuranosidase 1"/>
    <property type="match status" value="1"/>
</dbReference>
<dbReference type="Gene3D" id="2.60.120.560">
    <property type="entry name" value="Exo-inulinase, domain 1"/>
    <property type="match status" value="1"/>
</dbReference>
<dbReference type="Gene3D" id="2.60.120.260">
    <property type="entry name" value="Galactose-binding domain-like"/>
    <property type="match status" value="1"/>
</dbReference>
<dbReference type="Gene3D" id="3.20.20.80">
    <property type="entry name" value="Glycosidases"/>
    <property type="match status" value="1"/>
</dbReference>
<dbReference type="Gene3D" id="2.60.40.1180">
    <property type="entry name" value="Golgi alpha-mannosidase II"/>
    <property type="match status" value="1"/>
</dbReference>
<dbReference type="InterPro" id="IPR010720">
    <property type="entry name" value="Alpha-L-AF_C"/>
</dbReference>
<dbReference type="InterPro" id="IPR055235">
    <property type="entry name" value="ASD1_cat"/>
</dbReference>
<dbReference type="InterPro" id="IPR003305">
    <property type="entry name" value="CenC_carb-bd"/>
</dbReference>
<dbReference type="InterPro" id="IPR013320">
    <property type="entry name" value="ConA-like_dom_sf"/>
</dbReference>
<dbReference type="InterPro" id="IPR008979">
    <property type="entry name" value="Galactose-bd-like_sf"/>
</dbReference>
<dbReference type="InterPro" id="IPR013780">
    <property type="entry name" value="Glyco_hydro_b"/>
</dbReference>
<dbReference type="InterPro" id="IPR017853">
    <property type="entry name" value="Glycoside_hydrolase_SF"/>
</dbReference>
<dbReference type="InterPro" id="IPR051563">
    <property type="entry name" value="Glycosyl_Hydrolase_51"/>
</dbReference>
<dbReference type="PANTHER" id="PTHR31776">
    <property type="entry name" value="ALPHA-L-ARABINOFURANOSIDASE 1"/>
    <property type="match status" value="1"/>
</dbReference>
<dbReference type="PANTHER" id="PTHR31776:SF26">
    <property type="entry name" value="SECRETED ARABINOSIDASE"/>
    <property type="match status" value="1"/>
</dbReference>
<dbReference type="Pfam" id="PF22848">
    <property type="entry name" value="ASD1_dom"/>
    <property type="match status" value="1"/>
</dbReference>
<dbReference type="Pfam" id="PF02018">
    <property type="entry name" value="CBM_4_9"/>
    <property type="match status" value="1"/>
</dbReference>
<dbReference type="SMART" id="SM00813">
    <property type="entry name" value="Alpha-L-AF_C"/>
    <property type="match status" value="1"/>
</dbReference>
<dbReference type="SUPFAM" id="SSF51445">
    <property type="entry name" value="(Trans)glycosidases"/>
    <property type="match status" value="1"/>
</dbReference>
<dbReference type="SUPFAM" id="SSF49899">
    <property type="entry name" value="Concanavalin A-like lectins/glucanases"/>
    <property type="match status" value="1"/>
</dbReference>
<dbReference type="SUPFAM" id="SSF49785">
    <property type="entry name" value="Galactose-binding domain-like"/>
    <property type="match status" value="1"/>
</dbReference>
<dbReference type="SUPFAM" id="SSF51011">
    <property type="entry name" value="Glycosyl hydrolase domain"/>
    <property type="match status" value="1"/>
</dbReference>